<accession>Q2RZ60</accession>
<reference key="1">
    <citation type="journal article" date="2005" name="Proc. Natl. Acad. Sci. U.S.A.">
        <title>The genome of Salinibacter ruber: convergence and gene exchange among hyperhalophilic bacteria and archaea.</title>
        <authorList>
            <person name="Mongodin E.F."/>
            <person name="Nelson K.E."/>
            <person name="Daugherty S."/>
            <person name="DeBoy R.T."/>
            <person name="Wister J."/>
            <person name="Khouri H."/>
            <person name="Weidman J."/>
            <person name="Walsh D.A."/>
            <person name="Papke R.T."/>
            <person name="Sanchez Perez G."/>
            <person name="Sharma A.K."/>
            <person name="Nesbo C.L."/>
            <person name="MacLeod D."/>
            <person name="Bapteste E."/>
            <person name="Doolittle W.F."/>
            <person name="Charlebois R.L."/>
            <person name="Legault B."/>
            <person name="Rodriguez-Valera F."/>
        </authorList>
    </citation>
    <scope>NUCLEOTIDE SEQUENCE [LARGE SCALE GENOMIC DNA]</scope>
    <source>
        <strain>DSM 13855 / CECT 5946 / M31</strain>
    </source>
</reference>
<gene>
    <name evidence="1" type="primary">tig</name>
    <name type="ordered locus">SRU_2673</name>
</gene>
<proteinExistence type="inferred from homology"/>
<comment type="function">
    <text evidence="1">Involved in protein export. Acts as a chaperone by maintaining the newly synthesized protein in an open conformation. Functions as a peptidyl-prolyl cis-trans isomerase.</text>
</comment>
<comment type="catalytic activity">
    <reaction evidence="1">
        <text>[protein]-peptidylproline (omega=180) = [protein]-peptidylproline (omega=0)</text>
        <dbReference type="Rhea" id="RHEA:16237"/>
        <dbReference type="Rhea" id="RHEA-COMP:10747"/>
        <dbReference type="Rhea" id="RHEA-COMP:10748"/>
        <dbReference type="ChEBI" id="CHEBI:83833"/>
        <dbReference type="ChEBI" id="CHEBI:83834"/>
        <dbReference type="EC" id="5.2.1.8"/>
    </reaction>
</comment>
<comment type="subcellular location">
    <subcellularLocation>
        <location>Cytoplasm</location>
    </subcellularLocation>
    <text evidence="1">About half TF is bound to the ribosome near the polypeptide exit tunnel while the other half is free in the cytoplasm.</text>
</comment>
<comment type="domain">
    <text evidence="1">Consists of 3 domains; the N-terminus binds the ribosome, the middle domain has PPIase activity, while the C-terminus has intrinsic chaperone activity on its own.</text>
</comment>
<comment type="similarity">
    <text evidence="1">Belongs to the FKBP-type PPIase family. Tig subfamily.</text>
</comment>
<dbReference type="EC" id="5.2.1.8" evidence="1"/>
<dbReference type="EMBL" id="CP000159">
    <property type="protein sequence ID" value="ABC46094.1"/>
    <property type="molecule type" value="Genomic_DNA"/>
</dbReference>
<dbReference type="RefSeq" id="WP_011405385.1">
    <property type="nucleotide sequence ID" value="NC_007677.1"/>
</dbReference>
<dbReference type="RefSeq" id="YP_446771.1">
    <property type="nucleotide sequence ID" value="NC_007677.1"/>
</dbReference>
<dbReference type="SMR" id="Q2RZ60"/>
<dbReference type="STRING" id="309807.SRU_2673"/>
<dbReference type="EnsemblBacteria" id="ABC46094">
    <property type="protein sequence ID" value="ABC46094"/>
    <property type="gene ID" value="SRU_2673"/>
</dbReference>
<dbReference type="KEGG" id="sru:SRU_2673"/>
<dbReference type="PATRIC" id="fig|309807.25.peg.2786"/>
<dbReference type="eggNOG" id="COG0544">
    <property type="taxonomic scope" value="Bacteria"/>
</dbReference>
<dbReference type="HOGENOM" id="CLU_033058_3_0_10"/>
<dbReference type="OrthoDB" id="9767721at2"/>
<dbReference type="Proteomes" id="UP000008674">
    <property type="component" value="Chromosome"/>
</dbReference>
<dbReference type="GO" id="GO:0005737">
    <property type="term" value="C:cytoplasm"/>
    <property type="evidence" value="ECO:0007669"/>
    <property type="project" value="UniProtKB-SubCell"/>
</dbReference>
<dbReference type="GO" id="GO:0003755">
    <property type="term" value="F:peptidyl-prolyl cis-trans isomerase activity"/>
    <property type="evidence" value="ECO:0007669"/>
    <property type="project" value="UniProtKB-UniRule"/>
</dbReference>
<dbReference type="GO" id="GO:0051301">
    <property type="term" value="P:cell division"/>
    <property type="evidence" value="ECO:0007669"/>
    <property type="project" value="UniProtKB-KW"/>
</dbReference>
<dbReference type="GO" id="GO:0006457">
    <property type="term" value="P:protein folding"/>
    <property type="evidence" value="ECO:0007669"/>
    <property type="project" value="UniProtKB-UniRule"/>
</dbReference>
<dbReference type="GO" id="GO:0015031">
    <property type="term" value="P:protein transport"/>
    <property type="evidence" value="ECO:0007669"/>
    <property type="project" value="UniProtKB-UniRule"/>
</dbReference>
<dbReference type="Gene3D" id="3.10.50.40">
    <property type="match status" value="1"/>
</dbReference>
<dbReference type="Gene3D" id="3.30.70.1050">
    <property type="entry name" value="Trigger factor ribosome-binding domain"/>
    <property type="match status" value="1"/>
</dbReference>
<dbReference type="Gene3D" id="1.10.3120.10">
    <property type="entry name" value="Trigger factor, C-terminal domain"/>
    <property type="match status" value="1"/>
</dbReference>
<dbReference type="HAMAP" id="MF_00303">
    <property type="entry name" value="Trigger_factor_Tig"/>
    <property type="match status" value="1"/>
</dbReference>
<dbReference type="InterPro" id="IPR046357">
    <property type="entry name" value="PPIase_dom_sf"/>
</dbReference>
<dbReference type="InterPro" id="IPR005215">
    <property type="entry name" value="Trig_fac"/>
</dbReference>
<dbReference type="InterPro" id="IPR008880">
    <property type="entry name" value="Trigger_fac_C"/>
</dbReference>
<dbReference type="InterPro" id="IPR037041">
    <property type="entry name" value="Trigger_fac_C_sf"/>
</dbReference>
<dbReference type="InterPro" id="IPR008881">
    <property type="entry name" value="Trigger_fac_ribosome-bd_bac"/>
</dbReference>
<dbReference type="InterPro" id="IPR036611">
    <property type="entry name" value="Trigger_fac_ribosome-bd_sf"/>
</dbReference>
<dbReference type="InterPro" id="IPR027304">
    <property type="entry name" value="Trigger_fact/SurA_dom_sf"/>
</dbReference>
<dbReference type="NCBIfam" id="TIGR00115">
    <property type="entry name" value="tig"/>
    <property type="match status" value="1"/>
</dbReference>
<dbReference type="Pfam" id="PF05698">
    <property type="entry name" value="Trigger_C"/>
    <property type="match status" value="1"/>
</dbReference>
<dbReference type="Pfam" id="PF05697">
    <property type="entry name" value="Trigger_N"/>
    <property type="match status" value="1"/>
</dbReference>
<dbReference type="PIRSF" id="PIRSF003095">
    <property type="entry name" value="Trigger_factor"/>
    <property type="match status" value="1"/>
</dbReference>
<dbReference type="SUPFAM" id="SSF54534">
    <property type="entry name" value="FKBP-like"/>
    <property type="match status" value="1"/>
</dbReference>
<dbReference type="SUPFAM" id="SSF109998">
    <property type="entry name" value="Triger factor/SurA peptide-binding domain-like"/>
    <property type="match status" value="1"/>
</dbReference>
<dbReference type="SUPFAM" id="SSF102735">
    <property type="entry name" value="Trigger factor ribosome-binding domain"/>
    <property type="match status" value="1"/>
</dbReference>
<evidence type="ECO:0000255" key="1">
    <source>
        <dbReference type="HAMAP-Rule" id="MF_00303"/>
    </source>
</evidence>
<evidence type="ECO:0000256" key="2">
    <source>
        <dbReference type="SAM" id="MobiDB-lite"/>
    </source>
</evidence>
<name>TIG_SALRD</name>
<sequence>MDTTLSKASPVEYELDLHATADELEPKLKEALNAQRKNMDVQGFRKGKVPLGLVKKMHGEAIGYRVAEQFVQEAFEEEVEETDAIEPLGQPTLVDLDYELDADLQATLRFGVRPGVELEDLSSVEITMLDPEITEEDVEDEIERLRKEEADLLPLEEEAAEDTDYVNIDLQRIDPDTDTPIIGDKDEDLTFFLDDDRLKEELREALVGQKAGDTFRVELPQEHPAHEHAGHGHPHEHEGDGEDRLYEVTVNDVKRRDLPPLDEEFVRRVTEGELDDLEAFRNDIRERLQEAWNERAREMAQGEVIDKMLELHPVPVPESVIEGYLDSFVKQVEEENDGELPEDFDEEHFRQRNRRDAEDQGRWMLIRDQIVEEQDLEVSNEEIQTFFAEQSGGEEQVTAQQIEQFYQTMPQMMEKVEQQILSDKVYDFLFDRLDVESKSREEFEEEMQQQQQQQAQRQRMAP</sequence>
<feature type="chain" id="PRO_0000256613" description="Trigger factor">
    <location>
        <begin position="1"/>
        <end position="462"/>
    </location>
</feature>
<feature type="domain" description="PPIase FKBP-type" evidence="1">
    <location>
        <begin position="163"/>
        <end position="259"/>
    </location>
</feature>
<feature type="region of interest" description="Disordered" evidence="2">
    <location>
        <begin position="439"/>
        <end position="462"/>
    </location>
</feature>
<feature type="compositionally biased region" description="Low complexity" evidence="2">
    <location>
        <begin position="448"/>
        <end position="462"/>
    </location>
</feature>
<organism>
    <name type="scientific">Salinibacter ruber (strain DSM 13855 / M31)</name>
    <dbReference type="NCBI Taxonomy" id="309807"/>
    <lineage>
        <taxon>Bacteria</taxon>
        <taxon>Pseudomonadati</taxon>
        <taxon>Rhodothermota</taxon>
        <taxon>Rhodothermia</taxon>
        <taxon>Rhodothermales</taxon>
        <taxon>Salinibacteraceae</taxon>
        <taxon>Salinibacter</taxon>
    </lineage>
</organism>
<protein>
    <recommendedName>
        <fullName evidence="1">Trigger factor</fullName>
        <shortName evidence="1">TF</shortName>
        <ecNumber evidence="1">5.2.1.8</ecNumber>
    </recommendedName>
    <alternativeName>
        <fullName evidence="1">PPIase</fullName>
    </alternativeName>
</protein>
<keyword id="KW-0131">Cell cycle</keyword>
<keyword id="KW-0132">Cell division</keyword>
<keyword id="KW-0143">Chaperone</keyword>
<keyword id="KW-0963">Cytoplasm</keyword>
<keyword id="KW-0413">Isomerase</keyword>
<keyword id="KW-1185">Reference proteome</keyword>
<keyword id="KW-0697">Rotamase</keyword>